<evidence type="ECO:0000255" key="1">
    <source>
        <dbReference type="HAMAP-Rule" id="MF_00059"/>
    </source>
</evidence>
<dbReference type="EC" id="2.7.7.6" evidence="1"/>
<dbReference type="EMBL" id="BA000043">
    <property type="protein sequence ID" value="BAD74418.1"/>
    <property type="molecule type" value="Genomic_DNA"/>
</dbReference>
<dbReference type="RefSeq" id="WP_011229645.1">
    <property type="nucleotide sequence ID" value="NC_006510.1"/>
</dbReference>
<dbReference type="SMR" id="Q5L3R2"/>
<dbReference type="STRING" id="235909.GK0133"/>
<dbReference type="KEGG" id="gka:GK0133"/>
<dbReference type="eggNOG" id="COG0202">
    <property type="taxonomic scope" value="Bacteria"/>
</dbReference>
<dbReference type="HOGENOM" id="CLU_053084_0_1_9"/>
<dbReference type="Proteomes" id="UP000001172">
    <property type="component" value="Chromosome"/>
</dbReference>
<dbReference type="GO" id="GO:0005737">
    <property type="term" value="C:cytoplasm"/>
    <property type="evidence" value="ECO:0007669"/>
    <property type="project" value="UniProtKB-ARBA"/>
</dbReference>
<dbReference type="GO" id="GO:0000428">
    <property type="term" value="C:DNA-directed RNA polymerase complex"/>
    <property type="evidence" value="ECO:0007669"/>
    <property type="project" value="UniProtKB-KW"/>
</dbReference>
<dbReference type="GO" id="GO:0003677">
    <property type="term" value="F:DNA binding"/>
    <property type="evidence" value="ECO:0007669"/>
    <property type="project" value="UniProtKB-UniRule"/>
</dbReference>
<dbReference type="GO" id="GO:0003899">
    <property type="term" value="F:DNA-directed RNA polymerase activity"/>
    <property type="evidence" value="ECO:0007669"/>
    <property type="project" value="UniProtKB-UniRule"/>
</dbReference>
<dbReference type="GO" id="GO:0046983">
    <property type="term" value="F:protein dimerization activity"/>
    <property type="evidence" value="ECO:0007669"/>
    <property type="project" value="InterPro"/>
</dbReference>
<dbReference type="GO" id="GO:0006351">
    <property type="term" value="P:DNA-templated transcription"/>
    <property type="evidence" value="ECO:0007669"/>
    <property type="project" value="UniProtKB-UniRule"/>
</dbReference>
<dbReference type="CDD" id="cd06928">
    <property type="entry name" value="RNAP_alpha_NTD"/>
    <property type="match status" value="1"/>
</dbReference>
<dbReference type="FunFam" id="1.10.150.20:FF:000001">
    <property type="entry name" value="DNA-directed RNA polymerase subunit alpha"/>
    <property type="match status" value="1"/>
</dbReference>
<dbReference type="FunFam" id="2.170.120.12:FF:000001">
    <property type="entry name" value="DNA-directed RNA polymerase subunit alpha"/>
    <property type="match status" value="1"/>
</dbReference>
<dbReference type="Gene3D" id="1.10.150.20">
    <property type="entry name" value="5' to 3' exonuclease, C-terminal subdomain"/>
    <property type="match status" value="1"/>
</dbReference>
<dbReference type="Gene3D" id="2.170.120.12">
    <property type="entry name" value="DNA-directed RNA polymerase, insert domain"/>
    <property type="match status" value="1"/>
</dbReference>
<dbReference type="Gene3D" id="3.30.1360.10">
    <property type="entry name" value="RNA polymerase, RBP11-like subunit"/>
    <property type="match status" value="1"/>
</dbReference>
<dbReference type="HAMAP" id="MF_00059">
    <property type="entry name" value="RNApol_bact_RpoA"/>
    <property type="match status" value="1"/>
</dbReference>
<dbReference type="InterPro" id="IPR011262">
    <property type="entry name" value="DNA-dir_RNA_pol_insert"/>
</dbReference>
<dbReference type="InterPro" id="IPR011263">
    <property type="entry name" value="DNA-dir_RNA_pol_RpoA/D/Rpb3"/>
</dbReference>
<dbReference type="InterPro" id="IPR011773">
    <property type="entry name" value="DNA-dir_RpoA"/>
</dbReference>
<dbReference type="InterPro" id="IPR036603">
    <property type="entry name" value="RBP11-like"/>
</dbReference>
<dbReference type="InterPro" id="IPR011260">
    <property type="entry name" value="RNAP_asu_C"/>
</dbReference>
<dbReference type="InterPro" id="IPR036643">
    <property type="entry name" value="RNApol_insert_sf"/>
</dbReference>
<dbReference type="NCBIfam" id="NF003513">
    <property type="entry name" value="PRK05182.1-2"/>
    <property type="match status" value="1"/>
</dbReference>
<dbReference type="NCBIfam" id="NF003515">
    <property type="entry name" value="PRK05182.2-1"/>
    <property type="match status" value="1"/>
</dbReference>
<dbReference type="NCBIfam" id="NF003516">
    <property type="entry name" value="PRK05182.2-2"/>
    <property type="match status" value="1"/>
</dbReference>
<dbReference type="NCBIfam" id="NF003519">
    <property type="entry name" value="PRK05182.2-5"/>
    <property type="match status" value="1"/>
</dbReference>
<dbReference type="NCBIfam" id="TIGR02027">
    <property type="entry name" value="rpoA"/>
    <property type="match status" value="1"/>
</dbReference>
<dbReference type="Pfam" id="PF01000">
    <property type="entry name" value="RNA_pol_A_bac"/>
    <property type="match status" value="1"/>
</dbReference>
<dbReference type="Pfam" id="PF03118">
    <property type="entry name" value="RNA_pol_A_CTD"/>
    <property type="match status" value="1"/>
</dbReference>
<dbReference type="Pfam" id="PF01193">
    <property type="entry name" value="RNA_pol_L"/>
    <property type="match status" value="1"/>
</dbReference>
<dbReference type="SMART" id="SM00662">
    <property type="entry name" value="RPOLD"/>
    <property type="match status" value="1"/>
</dbReference>
<dbReference type="SUPFAM" id="SSF47789">
    <property type="entry name" value="C-terminal domain of RNA polymerase alpha subunit"/>
    <property type="match status" value="1"/>
</dbReference>
<dbReference type="SUPFAM" id="SSF56553">
    <property type="entry name" value="Insert subdomain of RNA polymerase alpha subunit"/>
    <property type="match status" value="1"/>
</dbReference>
<dbReference type="SUPFAM" id="SSF55257">
    <property type="entry name" value="RBP11-like subunits of RNA polymerase"/>
    <property type="match status" value="1"/>
</dbReference>
<keyword id="KW-0240">DNA-directed RNA polymerase</keyword>
<keyword id="KW-0548">Nucleotidyltransferase</keyword>
<keyword id="KW-1185">Reference proteome</keyword>
<keyword id="KW-0804">Transcription</keyword>
<keyword id="KW-0808">Transferase</keyword>
<feature type="chain" id="PRO_0000175310" description="DNA-directed RNA polymerase subunit alpha">
    <location>
        <begin position="1"/>
        <end position="314"/>
    </location>
</feature>
<feature type="region of interest" description="Alpha N-terminal domain (alpha-NTD)" evidence="1">
    <location>
        <begin position="1"/>
        <end position="228"/>
    </location>
</feature>
<feature type="region of interest" description="Alpha C-terminal domain (alpha-CTD)" evidence="1">
    <location>
        <begin position="245"/>
        <end position="314"/>
    </location>
</feature>
<sequence>MIEIEKPKIETVELSEDAKYGKFVVEPLERGYGTTLGNSLRRILLSSLPGAAVTSVQIDGVLHEFSTIDGVVEDVTAIILNIKKLALKIYSDEEKTLEIDVQGEGVVTAADITHDSDVEILNPDLHIATLAEGGRLRMRMTAKRGRGYVPAEANKREDQPIGVIPIDSIYTPVSRVSYQVENTRVGQVTDYDKLTIDVWTDGSIGPKEAISLGAKILTEHLNIFVGLTDEAQNAEIMVEKEDDQKEKVLEMTIEELDLSVRSYNCLKRAGINTVQELTQKTEEDMMKVRNLGRKSLEEVKAKLAELGLSLRKDD</sequence>
<protein>
    <recommendedName>
        <fullName evidence="1">DNA-directed RNA polymerase subunit alpha</fullName>
        <shortName evidence="1">RNAP subunit alpha</shortName>
        <ecNumber evidence="1">2.7.7.6</ecNumber>
    </recommendedName>
    <alternativeName>
        <fullName evidence="1">RNA polymerase subunit alpha</fullName>
    </alternativeName>
    <alternativeName>
        <fullName evidence="1">Transcriptase subunit alpha</fullName>
    </alternativeName>
</protein>
<reference key="1">
    <citation type="journal article" date="2004" name="Nucleic Acids Res.">
        <title>Thermoadaptation trait revealed by the genome sequence of thermophilic Geobacillus kaustophilus.</title>
        <authorList>
            <person name="Takami H."/>
            <person name="Takaki Y."/>
            <person name="Chee G.-J."/>
            <person name="Nishi S."/>
            <person name="Shimamura S."/>
            <person name="Suzuki H."/>
            <person name="Matsui S."/>
            <person name="Uchiyama I."/>
        </authorList>
    </citation>
    <scope>NUCLEOTIDE SEQUENCE [LARGE SCALE GENOMIC DNA]</scope>
    <source>
        <strain>HTA426</strain>
    </source>
</reference>
<proteinExistence type="inferred from homology"/>
<comment type="function">
    <text evidence="1">DNA-dependent RNA polymerase catalyzes the transcription of DNA into RNA using the four ribonucleoside triphosphates as substrates.</text>
</comment>
<comment type="catalytic activity">
    <reaction evidence="1">
        <text>RNA(n) + a ribonucleoside 5'-triphosphate = RNA(n+1) + diphosphate</text>
        <dbReference type="Rhea" id="RHEA:21248"/>
        <dbReference type="Rhea" id="RHEA-COMP:14527"/>
        <dbReference type="Rhea" id="RHEA-COMP:17342"/>
        <dbReference type="ChEBI" id="CHEBI:33019"/>
        <dbReference type="ChEBI" id="CHEBI:61557"/>
        <dbReference type="ChEBI" id="CHEBI:140395"/>
        <dbReference type="EC" id="2.7.7.6"/>
    </reaction>
</comment>
<comment type="subunit">
    <text evidence="1">Homodimer. The RNAP catalytic core consists of 2 alpha, 1 beta, 1 beta' and 1 omega subunit. When a sigma factor is associated with the core the holoenzyme is formed, which can initiate transcription.</text>
</comment>
<comment type="domain">
    <text evidence="1">The N-terminal domain is essential for RNAP assembly and basal transcription, whereas the C-terminal domain is involved in interaction with transcriptional regulators and with upstream promoter elements.</text>
</comment>
<comment type="similarity">
    <text evidence="1">Belongs to the RNA polymerase alpha chain family.</text>
</comment>
<accession>Q5L3R2</accession>
<name>RPOA_GEOKA</name>
<organism>
    <name type="scientific">Geobacillus kaustophilus (strain HTA426)</name>
    <dbReference type="NCBI Taxonomy" id="235909"/>
    <lineage>
        <taxon>Bacteria</taxon>
        <taxon>Bacillati</taxon>
        <taxon>Bacillota</taxon>
        <taxon>Bacilli</taxon>
        <taxon>Bacillales</taxon>
        <taxon>Anoxybacillaceae</taxon>
        <taxon>Geobacillus</taxon>
        <taxon>Geobacillus thermoleovorans group</taxon>
    </lineage>
</organism>
<gene>
    <name evidence="1" type="primary">rpoA</name>
    <name type="ordered locus">GK0133</name>
</gene>